<accession>A0A161CEU9</accession>
<accession>V9I2I1</accession>
<evidence type="ECO:0000250" key="1">
    <source>
        <dbReference type="UniProtKB" id="A0A0K0MCJ4"/>
    </source>
</evidence>
<evidence type="ECO:0000250" key="2">
    <source>
        <dbReference type="UniProtKB" id="Q65Z23"/>
    </source>
</evidence>
<evidence type="ECO:0000255" key="3"/>
<evidence type="ECO:0000255" key="4">
    <source>
        <dbReference type="PROSITE-ProRule" id="PRU00258"/>
    </source>
</evidence>
<evidence type="ECO:0000255" key="5">
    <source>
        <dbReference type="PROSITE-ProRule" id="PRU01348"/>
    </source>
</evidence>
<evidence type="ECO:0000255" key="6">
    <source>
        <dbReference type="PROSITE-ProRule" id="PRU01363"/>
    </source>
</evidence>
<evidence type="ECO:0000256" key="7">
    <source>
        <dbReference type="SAM" id="MobiDB-lite"/>
    </source>
</evidence>
<evidence type="ECO:0000269" key="8">
    <source>
    </source>
</evidence>
<evidence type="ECO:0000269" key="9">
    <source>
    </source>
</evidence>
<evidence type="ECO:0000269" key="10">
    <source ref="1"/>
</evidence>
<evidence type="ECO:0000303" key="11">
    <source ref="1"/>
</evidence>
<evidence type="ECO:0000305" key="12">
    <source>
    </source>
</evidence>
<evidence type="ECO:0000305" key="13">
    <source ref="1"/>
</evidence>
<name>CITS_MONRU</name>
<reference key="1">
    <citation type="journal article" date="2016" name="Chem. Sci.">
        <title>The molecular steps of citrinin biosynthesis in fungi.</title>
        <authorList>
            <person name="He Y."/>
            <person name="Cox R.J."/>
        </authorList>
    </citation>
    <scope>NUCLEOTIDE SEQUENCE [GENOMIC DNA]</scope>
    <scope>FUNCTION</scope>
    <scope>DISRUPTION PHENOTYPE</scope>
    <scope>CATALYTIC ACTIVITY</scope>
    <scope>PATHWAY</scope>
    <source>
        <strain>M7</strain>
    </source>
</reference>
<reference key="2">
    <citation type="submission" date="2010-08" db="EMBL/GenBank/DDBJ databases">
        <authorList>
            <person name="Li L."/>
            <person name="Chen F."/>
        </authorList>
    </citation>
    <scope>NUCLEOTIDE SEQUENCE [GENOMIC DNA] OF 464-1205</scope>
    <source>
        <strain>M7</strain>
    </source>
</reference>
<reference key="3">
    <citation type="journal article" date="2016" name="J. Agric. Food Chem.">
        <title>Effects of light intensity and color on the biomass, extracellular red pigment, and citrinin production of Monascus ruber.</title>
        <authorList>
            <person name="Wang L."/>
            <person name="Dai Y."/>
            <person name="Chen W."/>
            <person name="Shao Y."/>
            <person name="Chen F."/>
        </authorList>
    </citation>
    <scope>INDUCTION</scope>
    <source>
        <strain>M7</strain>
    </source>
</reference>
<reference key="4">
    <citation type="journal article" date="2017" name="Chem. Commun. (Camb.)">
        <title>In trans hydrolysis of carrier protein-bound acyl intermediates by CitA during citrinin biosynthesis.</title>
        <authorList>
            <person name="Storm P.A."/>
            <person name="Townsend C.A."/>
        </authorList>
    </citation>
    <scope>FUNCTION</scope>
    <scope>CATALYTIC ACTIVITY</scope>
    <scope>DOMAIN</scope>
    <scope>PATHWAY</scope>
</reference>
<protein>
    <recommendedName>
        <fullName evidence="11">Citrinin polyketide synthase</fullName>
        <shortName evidence="11">CitS</shortName>
        <ecNumber evidence="9 10">2.3.1.-</ecNumber>
    </recommendedName>
    <alternativeName>
        <fullName evidence="11">Non-reducing polyketide synthase citS</fullName>
    </alternativeName>
</protein>
<organism>
    <name type="scientific">Monascus ruber</name>
    <name type="common">Mold</name>
    <dbReference type="NCBI Taxonomy" id="89489"/>
    <lineage>
        <taxon>Eukaryota</taxon>
        <taxon>Fungi</taxon>
        <taxon>Dikarya</taxon>
        <taxon>Ascomycota</taxon>
        <taxon>Pezizomycotina</taxon>
        <taxon>Eurotiomycetes</taxon>
        <taxon>Eurotiomycetidae</taxon>
        <taxon>Eurotiales</taxon>
        <taxon>Aspergillaceae</taxon>
        <taxon>Monascus</taxon>
    </lineage>
</organism>
<gene>
    <name evidence="11" type="primary">citS</name>
    <name evidence="11" type="synonym">pksCT</name>
</gene>
<dbReference type="EC" id="2.3.1.-" evidence="9 10"/>
<dbReference type="EMBL" id="KT781075">
    <property type="protein sequence ID" value="ALI92655.1"/>
    <property type="molecule type" value="Genomic_DNA"/>
</dbReference>
<dbReference type="EMBL" id="HQ123042">
    <property type="protein sequence ID" value="AEL33707.1"/>
    <property type="molecule type" value="Genomic_DNA"/>
</dbReference>
<dbReference type="SMR" id="A0A161CEU9"/>
<dbReference type="GO" id="GO:0004315">
    <property type="term" value="F:3-oxoacyl-[acyl-carrier-protein] synthase activity"/>
    <property type="evidence" value="ECO:0007669"/>
    <property type="project" value="InterPro"/>
</dbReference>
<dbReference type="GO" id="GO:0008168">
    <property type="term" value="F:methyltransferase activity"/>
    <property type="evidence" value="ECO:0007669"/>
    <property type="project" value="UniProtKB-KW"/>
</dbReference>
<dbReference type="GO" id="GO:0031177">
    <property type="term" value="F:phosphopantetheine binding"/>
    <property type="evidence" value="ECO:0007669"/>
    <property type="project" value="InterPro"/>
</dbReference>
<dbReference type="GO" id="GO:0006633">
    <property type="term" value="P:fatty acid biosynthetic process"/>
    <property type="evidence" value="ECO:0007669"/>
    <property type="project" value="InterPro"/>
</dbReference>
<dbReference type="GO" id="GO:0032259">
    <property type="term" value="P:methylation"/>
    <property type="evidence" value="ECO:0007669"/>
    <property type="project" value="UniProtKB-KW"/>
</dbReference>
<dbReference type="CDD" id="cd02440">
    <property type="entry name" value="AdoMet_MTases"/>
    <property type="match status" value="1"/>
</dbReference>
<dbReference type="CDD" id="cd00833">
    <property type="entry name" value="PKS"/>
    <property type="match status" value="1"/>
</dbReference>
<dbReference type="Gene3D" id="3.30.70.3290">
    <property type="match status" value="1"/>
</dbReference>
<dbReference type="Gene3D" id="3.40.47.10">
    <property type="match status" value="1"/>
</dbReference>
<dbReference type="Gene3D" id="1.10.1200.10">
    <property type="entry name" value="ACP-like"/>
    <property type="match status" value="1"/>
</dbReference>
<dbReference type="Gene3D" id="3.40.366.10">
    <property type="entry name" value="Malonyl-Coenzyme A Acyl Carrier Protein, domain 2"/>
    <property type="match status" value="2"/>
</dbReference>
<dbReference type="Gene3D" id="3.40.50.720">
    <property type="entry name" value="NAD(P)-binding Rossmann-like Domain"/>
    <property type="match status" value="1"/>
</dbReference>
<dbReference type="Gene3D" id="3.10.129.110">
    <property type="entry name" value="Polyketide synthase dehydratase"/>
    <property type="match status" value="1"/>
</dbReference>
<dbReference type="Gene3D" id="3.40.50.150">
    <property type="entry name" value="Vaccinia Virus protein VP39"/>
    <property type="match status" value="1"/>
</dbReference>
<dbReference type="InterPro" id="IPR001227">
    <property type="entry name" value="Ac_transferase_dom_sf"/>
</dbReference>
<dbReference type="InterPro" id="IPR036736">
    <property type="entry name" value="ACP-like_sf"/>
</dbReference>
<dbReference type="InterPro" id="IPR014043">
    <property type="entry name" value="Acyl_transferase_dom"/>
</dbReference>
<dbReference type="InterPro" id="IPR016035">
    <property type="entry name" value="Acyl_Trfase/lysoPLipase"/>
</dbReference>
<dbReference type="InterPro" id="IPR013120">
    <property type="entry name" value="Far_NAD-bd"/>
</dbReference>
<dbReference type="InterPro" id="IPR018201">
    <property type="entry name" value="Ketoacyl_synth_AS"/>
</dbReference>
<dbReference type="InterPro" id="IPR014031">
    <property type="entry name" value="Ketoacyl_synth_C"/>
</dbReference>
<dbReference type="InterPro" id="IPR014030">
    <property type="entry name" value="Ketoacyl_synth_N"/>
</dbReference>
<dbReference type="InterPro" id="IPR016036">
    <property type="entry name" value="Malonyl_transacylase_ACP-bd"/>
</dbReference>
<dbReference type="InterPro" id="IPR013217">
    <property type="entry name" value="Methyltransf_12"/>
</dbReference>
<dbReference type="InterPro" id="IPR036291">
    <property type="entry name" value="NAD(P)-bd_dom_sf"/>
</dbReference>
<dbReference type="InterPro" id="IPR020841">
    <property type="entry name" value="PKS_Beta-ketoAc_synthase_dom"/>
</dbReference>
<dbReference type="InterPro" id="IPR042104">
    <property type="entry name" value="PKS_dehydratase_sf"/>
</dbReference>
<dbReference type="InterPro" id="IPR049900">
    <property type="entry name" value="PKS_mFAS_DH"/>
</dbReference>
<dbReference type="InterPro" id="IPR020806">
    <property type="entry name" value="PKS_PP-bd"/>
</dbReference>
<dbReference type="InterPro" id="IPR050444">
    <property type="entry name" value="Polyketide_Synthase"/>
</dbReference>
<dbReference type="InterPro" id="IPR009081">
    <property type="entry name" value="PP-bd_ACP"/>
</dbReference>
<dbReference type="InterPro" id="IPR006162">
    <property type="entry name" value="Ppantetheine_attach_site"/>
</dbReference>
<dbReference type="InterPro" id="IPR029063">
    <property type="entry name" value="SAM-dependent_MTases_sf"/>
</dbReference>
<dbReference type="InterPro" id="IPR032088">
    <property type="entry name" value="SAT"/>
</dbReference>
<dbReference type="InterPro" id="IPR016039">
    <property type="entry name" value="Thiolase-like"/>
</dbReference>
<dbReference type="PANTHER" id="PTHR45681:SF6">
    <property type="entry name" value="POLYKETIDE SYNTHASE 37"/>
    <property type="match status" value="1"/>
</dbReference>
<dbReference type="PANTHER" id="PTHR45681">
    <property type="entry name" value="POLYKETIDE SYNTHASE 44-RELATED"/>
    <property type="match status" value="1"/>
</dbReference>
<dbReference type="Pfam" id="PF00698">
    <property type="entry name" value="Acyl_transf_1"/>
    <property type="match status" value="1"/>
</dbReference>
<dbReference type="Pfam" id="PF18558">
    <property type="entry name" value="HTH_51"/>
    <property type="match status" value="1"/>
</dbReference>
<dbReference type="Pfam" id="PF00109">
    <property type="entry name" value="ketoacyl-synt"/>
    <property type="match status" value="1"/>
</dbReference>
<dbReference type="Pfam" id="PF02801">
    <property type="entry name" value="Ketoacyl-synt_C"/>
    <property type="match status" value="1"/>
</dbReference>
<dbReference type="Pfam" id="PF08242">
    <property type="entry name" value="Methyltransf_12"/>
    <property type="match status" value="1"/>
</dbReference>
<dbReference type="Pfam" id="PF07993">
    <property type="entry name" value="NAD_binding_4"/>
    <property type="match status" value="1"/>
</dbReference>
<dbReference type="Pfam" id="PF00550">
    <property type="entry name" value="PP-binding"/>
    <property type="match status" value="1"/>
</dbReference>
<dbReference type="Pfam" id="PF16073">
    <property type="entry name" value="SAT"/>
    <property type="match status" value="1"/>
</dbReference>
<dbReference type="SMART" id="SM00827">
    <property type="entry name" value="PKS_AT"/>
    <property type="match status" value="1"/>
</dbReference>
<dbReference type="SMART" id="SM00825">
    <property type="entry name" value="PKS_KS"/>
    <property type="match status" value="1"/>
</dbReference>
<dbReference type="SMART" id="SM00823">
    <property type="entry name" value="PKS_PP"/>
    <property type="match status" value="1"/>
</dbReference>
<dbReference type="SUPFAM" id="SSF47336">
    <property type="entry name" value="ACP-like"/>
    <property type="match status" value="1"/>
</dbReference>
<dbReference type="SUPFAM" id="SSF52151">
    <property type="entry name" value="FabD/lysophospholipase-like"/>
    <property type="match status" value="1"/>
</dbReference>
<dbReference type="SUPFAM" id="SSF51735">
    <property type="entry name" value="NAD(P)-binding Rossmann-fold domains"/>
    <property type="match status" value="1"/>
</dbReference>
<dbReference type="SUPFAM" id="SSF55048">
    <property type="entry name" value="Probable ACP-binding domain of malonyl-CoA ACP transacylase"/>
    <property type="match status" value="1"/>
</dbReference>
<dbReference type="SUPFAM" id="SSF53335">
    <property type="entry name" value="S-adenosyl-L-methionine-dependent methyltransferases"/>
    <property type="match status" value="1"/>
</dbReference>
<dbReference type="SUPFAM" id="SSF53901">
    <property type="entry name" value="Thiolase-like"/>
    <property type="match status" value="1"/>
</dbReference>
<dbReference type="PROSITE" id="PS50075">
    <property type="entry name" value="CARRIER"/>
    <property type="match status" value="1"/>
</dbReference>
<dbReference type="PROSITE" id="PS00606">
    <property type="entry name" value="KS3_1"/>
    <property type="match status" value="1"/>
</dbReference>
<dbReference type="PROSITE" id="PS52004">
    <property type="entry name" value="KS3_2"/>
    <property type="match status" value="1"/>
</dbReference>
<dbReference type="PROSITE" id="PS00012">
    <property type="entry name" value="PHOSPHOPANTETHEINE"/>
    <property type="match status" value="1"/>
</dbReference>
<dbReference type="PROSITE" id="PS52019">
    <property type="entry name" value="PKS_MFAS_DH"/>
    <property type="match status" value="1"/>
</dbReference>
<keyword id="KW-0012">Acyltransferase</keyword>
<keyword id="KW-0489">Methyltransferase</keyword>
<keyword id="KW-0511">Multifunctional enzyme</keyword>
<keyword id="KW-0521">NADP</keyword>
<keyword id="KW-0596">Phosphopantetheine</keyword>
<keyword id="KW-0597">Phosphoprotein</keyword>
<keyword id="KW-0808">Transferase</keyword>
<feature type="chain" id="PRO_0000440313" description="Citrinin polyketide synthase">
    <location>
        <begin position="1"/>
        <end position="2593"/>
    </location>
</feature>
<feature type="domain" description="Ketosynthase family 3 (KS3)" evidence="5">
    <location>
        <begin position="391"/>
        <end position="806"/>
    </location>
</feature>
<feature type="domain" description="PKS/mFAS DH" evidence="6">
    <location>
        <begin position="1291"/>
        <end position="1603"/>
    </location>
</feature>
<feature type="domain" description="Carrier" evidence="4">
    <location>
        <begin position="1661"/>
        <end position="1738"/>
    </location>
</feature>
<feature type="region of interest" description="N-terminal acylcarrier protein transacylase domain (SAT)" evidence="1">
    <location>
        <begin position="70"/>
        <end position="224"/>
    </location>
</feature>
<feature type="region of interest" description="Malonyl-CoA:ACP transacylase (MAT) domain" evidence="3">
    <location>
        <begin position="906"/>
        <end position="1191"/>
    </location>
</feature>
<feature type="region of interest" description="N-terminal hotdog fold" evidence="6">
    <location>
        <begin position="1291"/>
        <end position="1424"/>
    </location>
</feature>
<feature type="region of interest" description="Product template (PT) domain" evidence="3">
    <location>
        <begin position="1322"/>
        <end position="1601"/>
    </location>
</feature>
<feature type="region of interest" description="C-terminal hotdog fold" evidence="6">
    <location>
        <begin position="1451"/>
        <end position="1603"/>
    </location>
</feature>
<feature type="region of interest" description="Disordered" evidence="7">
    <location>
        <begin position="1636"/>
        <end position="1662"/>
    </location>
</feature>
<feature type="region of interest" description="Methyltransferase (CMeT) domain" evidence="3">
    <location>
        <begin position="1960"/>
        <end position="2134"/>
    </location>
</feature>
<feature type="region of interest" description="NADPH-binding (R) domain" evidence="3">
    <location>
        <begin position="2215"/>
        <end position="2459"/>
    </location>
</feature>
<feature type="active site" description="Nucleophile; for transacylase activity" evidence="1">
    <location>
        <position position="139"/>
    </location>
</feature>
<feature type="active site" description="Proton donor/acceptor; for transacylase activity" evidence="1">
    <location>
        <position position="258"/>
    </location>
</feature>
<feature type="active site" description="For beta-ketoacyl synthase activity" evidence="5">
    <location>
        <position position="555"/>
    </location>
</feature>
<feature type="active site" description="For beta-ketoacyl synthase activity" evidence="5">
    <location>
        <position position="690"/>
    </location>
</feature>
<feature type="active site" description="For beta-ketoacyl synthase activity" evidence="5">
    <location>
        <position position="729"/>
    </location>
</feature>
<feature type="active site" description="Proton acceptor; for dehydratase activity" evidence="6">
    <location>
        <position position="1326"/>
    </location>
</feature>
<feature type="active site" description="Proton donor; for dehydratase activity" evidence="6">
    <location>
        <position position="1508"/>
    </location>
</feature>
<feature type="active site" description="For methyltransferase activity" evidence="2">
    <location>
        <position position="1955"/>
    </location>
</feature>
<feature type="active site" description="For methyltransferase activity" evidence="2">
    <location>
        <position position="2067"/>
    </location>
</feature>
<feature type="active site" description="For methyltransferase activity" evidence="2">
    <location>
        <position position="2093"/>
    </location>
</feature>
<feature type="modified residue" description="O-(pantetheine 4'-phosphoryl)serine" evidence="4">
    <location>
        <position position="1698"/>
    </location>
</feature>
<proteinExistence type="evidence at protein level"/>
<sequence length="2593" mass="285945">MIDSTSHSNLRSKAFIFGPQDLSFDVRSFNKLHSQLQNHQWVLDALASLPKLWDNFAASDQKVQQSNTGKLLENLNAWISSGVAPEEAFPLPNVLLSPLVVIGQLVEYMTFLKAAFPDLGKKHDLPISIKEDTETFGLCTGTLCAFAVACSSNIADIQHYGAVAARLAMLVGAIVDTEEVLSDPEGKSVSFSASWNSAEFSDSFTHVLETFPDAYVSVIVDQRRATLTASKKTAPAIIERLKQEGAHVTSIALSGRFHWKKHQDAVSSLIQFCGLDPDLQLADATKMLLPSRSSSDGQYITTGKLHELALRAILLEQSEWYKTCRISYLSKFIMDDAAVICFGPERCMPPTLARKLGPRLTYVSEIDISSSRVPGQLLGGTQKLNLTDLPDERIAVIGMACRLPGAEDHEGFWEILKTGQSQHREVPEDRFGMATAWREADKRKWYGNFIDNYDTFDHKFFKKSPREMASTDPQHRLMLQVAYQAVEQSGYFRNNGTNRRIGCFMGVGNVDYEDNIACYPANAYSATGNLKSFLAGKISHHFGWTGPSLTLDTACSSSSVAIHQACRSILSGECNGALAGGVNVITSPNWYHNLAGASFLSPTGQCKPFDAKGDGYCRGEGVGAVFLKRLSSAIADGDQVFGVIASTKVYQNQNCTAITVPNAISLSELFTDVVRQARLEPKDITLVEAHGTGTAVGDPAEYDGIRAVFGGPIRSDVLSLGSVKGLVGHTECASGVVSLIKTLLMIQQGFIPPQASFSSINPSLNAKAEEKIEISTRLKPWDAPFRAALINNYGASGSNASMVVTQPPNLTETPSTPLPGKSYPFWISAFDQQSLQSYVRRLRQFLEKHAADKNLSVANLSFQVACQSNWSLPQALVFSASTKEELNRALASFEKGSTDFPSVQLPDPKPVILCFGGQVSTYVGLDQEVYNSTAILRHYLDQCDAMCLSLGLQSIYPAIFQRSPIEDIVQLQTALFAMQYSCAKAWIDSGLKVASVVGHSFGELIALCVSNAVSLKDAVKMISGRARLIKERWGADKGSMIAVEADLSDVEALLAKVKSQMGSETGLAIACYNASKSFTLAGPTKDVDHAENLLKNDPDFSGIRYKRLNVTNAFHSVLVDALIDDLESLGQGIRFKEPTIKLERATEQESTSTLNANYVATHMRKPVFFAQAVKRLSDKFPVAIWLEAGSNSTITAMASRALGTSNSSFQAVNITSEGAFRFLCDTTVKLWKEGQKVSFWAHHRLQTPMYTPVLLPPYQFEKSRHWMDLKVPPKPEASVQVAEQTAIIEAPKGLTTFVGYQDASQRSVRFRVNVTTEKFNRLLSGHIMANAAAVCPGMFQVEIALDALTSLRPEFQARSFIPELHDLRHYQPLVRDESRAVWIEAHCPNAEGLVWNWKLTASDDKGSGSVTHTSGTITFQAADSVQVKSEFEKLRRLIGRKRCLQLLDSNVADDILQGRNIYRAFTEVIDYKEIYRHVTKIAGRDNESAGRVIKTYDGETWLDTVLTDCFCQVAGIFVNLMTTKIDLSERGIFICDGIDRWLRAPNAGSNNTPSQVYEVFALHHCESDSKYLSDVFAFDAREGSLVEVALGISYQKVSISGIRRVLSKGMPAGLQPQVPTSPAAVAAIKTVSPPPVADSPLVDGSSTAVSGTPPTKKAPKAPSVDITGKMREIICNLSGLEPDEVKDDSDLVELGIDSLMSMELAREVDLAFKTTIDVTQLIDVTDFRSLVECMQRILGIDNQEDNTYLAEGLNGHEGVVTNGNAYHVNGTNGVVNGNGVLFPELGGSILPKSAILDAFRIAKEATDDFILNGQLGTYYNEVMPRSTELCVAHIVNAFEQLGCPIRSAAAYQRLERVPYLPKHERFMNLIYGLLEEARLIDINGSEITRTSVPVSTKSVETMLEELLHDEPLHAAEHKLTSLTGSKFADCITGKEDGLQLIFGSPEGREIVTDVYAKSPINAVWIQQAEFFLEQLVKRLPNTGEPLRILEMGAGTGGTTVKMLPLLERLGVPVEYTMTDLSSSLIAAARKRFKKYPFMKFKVVNIESPPDPQLVHSQHIILATNCVHATRNLEISTRNIHRILRPDGFLLLLEMTEQVPWVDFIFGLLEGWWLFEDGRRHALQPATHWKKILTSVGYGHVDWTEGTRPEANIQRLIIALASEPRYDHTPQSLQPPVQVPLTDIAGRQEIIDTYIREYTEDFRALPIPGIQQAVMPAPTGHCVLVTGATGSLGSHVVGYLSRLPNVHTVVCLNRRSTVPATIRQEEALKVRGISLDDNSRSKLVVLEVETAKPLLGLPVETYQKLVNTATHIVHSAWPMSLTRPIRGYESQFKVMQNLINLAREVAAWRPVPFKFSFQFISSIGVVGYYPLRYGEIIAPEETMTADSVLPVGYAEAKLVCERMLDETLHQYPDRFRPMAVRIAQIAGSTSNGHWNPVEHFAFLIKSSQTLKALPDFDGSLSWCPVDDVSATLGELLISNTTPYSIYHIENPSRQQWRKMVKTLAQSLDIPRDGIIPFDQWIERVRNSSASINDNPARQLLEFFDQHFIRMSCGNLILDTTKTREHSATLRERGPVGPGLVEKYISAWKTMGFLD</sequence>
<comment type="function">
    <text evidence="9 10">Non-reducing polyketide synthase; part of the gene cluster that mediates the biosynthesis of the mycotoxin citrinin, a hepato-nephrotoxic compound to humans due to inhibition of respiration complex III (PubMed:29189834, Ref.1). The pathway begins with the synthesis of a keto-aldehyde intermediate by the citrinin PKS (pksCT also named citS) from successive condensations of 4 malonyl-CoA units, presumably with a simple acetyl-CoA starter unit (PubMed:29189834, Ref.1). Release of the keto-aldehyde intermediate is consistent with the presence of the C-terminal reductive release domain (Ref.1). CitA collaborates with citS by catalyzing the hydrolysis of ACP-bound acyl intermediates to free the ACP from stalled intermediates (PubMed:29189834). CitB then catalyzes the oxidation of the C-12 methyl of the ketone intermediate to an alcohol intermediate which is further oxidized by the oxidoreductase citC to produce a bisaldehyde intermediate (Ref.1). The fourth catalytic step is catalyzed by the citD aldehyde dehydrogenase (Ref.1). The final transformation is the reduction of C-3 by citE to provide the chemically stable citrinin nucleus (Ref.1). CitE appears highly selective for its substrate as its presence in any context other than a full complement of citS and citA-D does not result in observable new compounds (Ref.1).</text>
</comment>
<comment type="cofactor">
    <cofactor evidence="3">
        <name>pantetheine 4'-phosphate</name>
        <dbReference type="ChEBI" id="CHEBI:47942"/>
    </cofactor>
    <text evidence="3">Binds 1 phosphopantetheine covalently.</text>
</comment>
<comment type="pathway">
    <text evidence="9 10">Mycotoxin biosynthesis.</text>
</comment>
<comment type="induction">
    <text evidence="8">Expression is stimulated under green light conditions (PubMed:27998068).</text>
</comment>
<comment type="domain">
    <text evidence="12 13">Multidomain protein; including an N-terminal starter unit:ACP transacylase (SAT) domain, a beta-ketoacyl synthase (KS) domain, a malonyl-CoA:ACP transacylase (MAT) domain, a product template domain, a acyl carrier protein (ACP) domain, a methyltransferase domain (CMeT) and a reductive NADPH-binding domain that is required for NADPH-dependent product release (Ref.1). The CMet adds methyl groups as check-point tags, which are recognized by KS, such that a lack of methylation causes release of immature products at the triketide stage.</text>
</comment>
<comment type="disruption phenotype">
    <text evidence="10">Abolishes the production of citrinin (Ref.1).</text>
</comment>